<sequence length="618" mass="69371">MSETDAPDPRAIVLETVAKLPNLPGVYRYFDAEDNLLYVGKARDLKKRVSSYFLKNLASPRTALMVERIARLETTVTRSEAEALLLENNLIKTLQPRYNILFRDDKSYPYLKITGQEYPRMAYYRGAVDKKNQYFGPFPSGWAVKESMQILQKVFLLRTCEDSVFANRTRPCLLHQIHRCSGPCVNFISKEDYALDVENAAKFLRGRQSEVLETLQGKMLAYAEELKFEQAALVRNQINALSRVLHQQSMETGGDADIDIIAVIVQGGRACVNLAMVRGGRHLGDRAYFPTHVDNALASAEESIATEVMKAFLAQHYIEKFIPGTLILNTEMDEPELMLALMEQCGHRINVVFQPQGQRRQWLEMAHKGAEISLARLLSEQGSQQARTRMLVDALGIDVPDLESFRVECFDISHTQGEATQASCVVFHHHAMQNGEYRRYNINDITPGDDYAAMRQVLLRRYEKVANGDGVMPDVVLIDGGKGQVEMARQVFVELGLDISLIVGVAKGEGRKVGLETLVFVDGRPPQELGKESGALMLIAQIRDEAHRFAITGMRAKRAKARQTSRLEEIEGIGAKRRQKLLARFGGLRGVVDASIEDLASVEGISRQLAEDIYKQLH</sequence>
<gene>
    <name evidence="1" type="primary">uvrC</name>
    <name type="ordered locus">mma_1376</name>
</gene>
<accession>A6SXR9</accession>
<comment type="function">
    <text evidence="1">The UvrABC repair system catalyzes the recognition and processing of DNA lesions. UvrC both incises the 5' and 3' sides of the lesion. The N-terminal half is responsible for the 3' incision and the C-terminal half is responsible for the 5' incision.</text>
</comment>
<comment type="subunit">
    <text evidence="1">Interacts with UvrB in an incision complex.</text>
</comment>
<comment type="subcellular location">
    <subcellularLocation>
        <location evidence="1">Cytoplasm</location>
    </subcellularLocation>
</comment>
<comment type="similarity">
    <text evidence="1">Belongs to the UvrC family.</text>
</comment>
<dbReference type="EMBL" id="CP000269">
    <property type="protein sequence ID" value="ABR88505.1"/>
    <property type="molecule type" value="Genomic_DNA"/>
</dbReference>
<dbReference type="RefSeq" id="WP_012079232.1">
    <property type="nucleotide sequence ID" value="NC_009659.1"/>
</dbReference>
<dbReference type="SMR" id="A6SXR9"/>
<dbReference type="STRING" id="375286.mma_1376"/>
<dbReference type="KEGG" id="mms:mma_1376"/>
<dbReference type="eggNOG" id="COG0322">
    <property type="taxonomic scope" value="Bacteria"/>
</dbReference>
<dbReference type="HOGENOM" id="CLU_014841_3_0_4"/>
<dbReference type="OrthoDB" id="9804933at2"/>
<dbReference type="Proteomes" id="UP000006388">
    <property type="component" value="Chromosome"/>
</dbReference>
<dbReference type="GO" id="GO:0005737">
    <property type="term" value="C:cytoplasm"/>
    <property type="evidence" value="ECO:0007669"/>
    <property type="project" value="UniProtKB-SubCell"/>
</dbReference>
<dbReference type="GO" id="GO:0009380">
    <property type="term" value="C:excinuclease repair complex"/>
    <property type="evidence" value="ECO:0007669"/>
    <property type="project" value="InterPro"/>
</dbReference>
<dbReference type="GO" id="GO:0003677">
    <property type="term" value="F:DNA binding"/>
    <property type="evidence" value="ECO:0007669"/>
    <property type="project" value="UniProtKB-UniRule"/>
</dbReference>
<dbReference type="GO" id="GO:0009381">
    <property type="term" value="F:excinuclease ABC activity"/>
    <property type="evidence" value="ECO:0007669"/>
    <property type="project" value="UniProtKB-UniRule"/>
</dbReference>
<dbReference type="GO" id="GO:0006289">
    <property type="term" value="P:nucleotide-excision repair"/>
    <property type="evidence" value="ECO:0007669"/>
    <property type="project" value="UniProtKB-UniRule"/>
</dbReference>
<dbReference type="GO" id="GO:0009432">
    <property type="term" value="P:SOS response"/>
    <property type="evidence" value="ECO:0007669"/>
    <property type="project" value="UniProtKB-UniRule"/>
</dbReference>
<dbReference type="CDD" id="cd10434">
    <property type="entry name" value="GIY-YIG_UvrC_Cho"/>
    <property type="match status" value="1"/>
</dbReference>
<dbReference type="FunFam" id="3.30.420.340:FF:000001">
    <property type="entry name" value="UvrABC system protein C"/>
    <property type="match status" value="1"/>
</dbReference>
<dbReference type="FunFam" id="3.40.1440.10:FF:000001">
    <property type="entry name" value="UvrABC system protein C"/>
    <property type="match status" value="1"/>
</dbReference>
<dbReference type="Gene3D" id="1.10.150.20">
    <property type="entry name" value="5' to 3' exonuclease, C-terminal subdomain"/>
    <property type="match status" value="1"/>
</dbReference>
<dbReference type="Gene3D" id="3.40.1440.10">
    <property type="entry name" value="GIY-YIG endonuclease"/>
    <property type="match status" value="1"/>
</dbReference>
<dbReference type="Gene3D" id="4.10.860.10">
    <property type="entry name" value="UVR domain"/>
    <property type="match status" value="1"/>
</dbReference>
<dbReference type="Gene3D" id="3.30.420.340">
    <property type="entry name" value="UvrC, RNAse H endonuclease domain"/>
    <property type="match status" value="1"/>
</dbReference>
<dbReference type="HAMAP" id="MF_00203">
    <property type="entry name" value="UvrC"/>
    <property type="match status" value="1"/>
</dbReference>
<dbReference type="InterPro" id="IPR000305">
    <property type="entry name" value="GIY-YIG_endonuc"/>
</dbReference>
<dbReference type="InterPro" id="IPR035901">
    <property type="entry name" value="GIY-YIG_endonuc_sf"/>
</dbReference>
<dbReference type="InterPro" id="IPR047296">
    <property type="entry name" value="GIY-YIG_UvrC_Cho"/>
</dbReference>
<dbReference type="InterPro" id="IPR003583">
    <property type="entry name" value="Hlx-hairpin-Hlx_DNA-bd_motif"/>
</dbReference>
<dbReference type="InterPro" id="IPR010994">
    <property type="entry name" value="RuvA_2-like"/>
</dbReference>
<dbReference type="InterPro" id="IPR001943">
    <property type="entry name" value="UVR_dom"/>
</dbReference>
<dbReference type="InterPro" id="IPR036876">
    <property type="entry name" value="UVR_dom_sf"/>
</dbReference>
<dbReference type="InterPro" id="IPR050066">
    <property type="entry name" value="UvrABC_protein_C"/>
</dbReference>
<dbReference type="InterPro" id="IPR004791">
    <property type="entry name" value="UvrC"/>
</dbReference>
<dbReference type="InterPro" id="IPR001162">
    <property type="entry name" value="UvrC_RNase_H_dom"/>
</dbReference>
<dbReference type="InterPro" id="IPR038476">
    <property type="entry name" value="UvrC_RNase_H_dom_sf"/>
</dbReference>
<dbReference type="NCBIfam" id="TIGR00194">
    <property type="entry name" value="uvrC"/>
    <property type="match status" value="1"/>
</dbReference>
<dbReference type="PANTHER" id="PTHR30562:SF1">
    <property type="entry name" value="UVRABC SYSTEM PROTEIN C"/>
    <property type="match status" value="1"/>
</dbReference>
<dbReference type="PANTHER" id="PTHR30562">
    <property type="entry name" value="UVRC/OXIDOREDUCTASE"/>
    <property type="match status" value="1"/>
</dbReference>
<dbReference type="Pfam" id="PF01541">
    <property type="entry name" value="GIY-YIG"/>
    <property type="match status" value="1"/>
</dbReference>
<dbReference type="Pfam" id="PF14520">
    <property type="entry name" value="HHH_5"/>
    <property type="match status" value="1"/>
</dbReference>
<dbReference type="Pfam" id="PF02151">
    <property type="entry name" value="UVR"/>
    <property type="match status" value="1"/>
</dbReference>
<dbReference type="Pfam" id="PF22920">
    <property type="entry name" value="UvrC_RNaseH"/>
    <property type="match status" value="1"/>
</dbReference>
<dbReference type="Pfam" id="PF08459">
    <property type="entry name" value="UvrC_RNaseH_dom"/>
    <property type="match status" value="1"/>
</dbReference>
<dbReference type="SMART" id="SM00465">
    <property type="entry name" value="GIYc"/>
    <property type="match status" value="1"/>
</dbReference>
<dbReference type="SMART" id="SM00278">
    <property type="entry name" value="HhH1"/>
    <property type="match status" value="2"/>
</dbReference>
<dbReference type="SUPFAM" id="SSF46600">
    <property type="entry name" value="C-terminal UvrC-binding domain of UvrB"/>
    <property type="match status" value="1"/>
</dbReference>
<dbReference type="SUPFAM" id="SSF82771">
    <property type="entry name" value="GIY-YIG endonuclease"/>
    <property type="match status" value="1"/>
</dbReference>
<dbReference type="SUPFAM" id="SSF47781">
    <property type="entry name" value="RuvA domain 2-like"/>
    <property type="match status" value="1"/>
</dbReference>
<dbReference type="PROSITE" id="PS50164">
    <property type="entry name" value="GIY_YIG"/>
    <property type="match status" value="1"/>
</dbReference>
<dbReference type="PROSITE" id="PS50151">
    <property type="entry name" value="UVR"/>
    <property type="match status" value="1"/>
</dbReference>
<dbReference type="PROSITE" id="PS50165">
    <property type="entry name" value="UVRC"/>
    <property type="match status" value="1"/>
</dbReference>
<name>UVRC_JANMA</name>
<protein>
    <recommendedName>
        <fullName evidence="1">UvrABC system protein C</fullName>
        <shortName evidence="1">Protein UvrC</shortName>
    </recommendedName>
    <alternativeName>
        <fullName evidence="1">Excinuclease ABC subunit C</fullName>
    </alternativeName>
</protein>
<organism>
    <name type="scientific">Janthinobacterium sp. (strain Marseille)</name>
    <name type="common">Minibacterium massiliensis</name>
    <dbReference type="NCBI Taxonomy" id="375286"/>
    <lineage>
        <taxon>Bacteria</taxon>
        <taxon>Pseudomonadati</taxon>
        <taxon>Pseudomonadota</taxon>
        <taxon>Betaproteobacteria</taxon>
        <taxon>Burkholderiales</taxon>
        <taxon>Oxalobacteraceae</taxon>
        <taxon>Janthinobacterium</taxon>
    </lineage>
</organism>
<feature type="chain" id="PRO_1000099492" description="UvrABC system protein C">
    <location>
        <begin position="1"/>
        <end position="618"/>
    </location>
</feature>
<feature type="domain" description="GIY-YIG" evidence="1">
    <location>
        <begin position="22"/>
        <end position="100"/>
    </location>
</feature>
<feature type="domain" description="UVR" evidence="1">
    <location>
        <begin position="209"/>
        <end position="244"/>
    </location>
</feature>
<reference key="1">
    <citation type="journal article" date="2007" name="PLoS Genet.">
        <title>Genome analysis of Minibacterium massiliensis highlights the convergent evolution of water-living bacteria.</title>
        <authorList>
            <person name="Audic S."/>
            <person name="Robert C."/>
            <person name="Campagna B."/>
            <person name="Parinello H."/>
            <person name="Claverie J.-M."/>
            <person name="Raoult D."/>
            <person name="Drancourt M."/>
        </authorList>
    </citation>
    <scope>NUCLEOTIDE SEQUENCE [LARGE SCALE GENOMIC DNA]</scope>
    <source>
        <strain>Marseille</strain>
    </source>
</reference>
<keyword id="KW-0963">Cytoplasm</keyword>
<keyword id="KW-0227">DNA damage</keyword>
<keyword id="KW-0228">DNA excision</keyword>
<keyword id="KW-0234">DNA repair</keyword>
<keyword id="KW-0267">Excision nuclease</keyword>
<keyword id="KW-0742">SOS response</keyword>
<proteinExistence type="inferred from homology"/>
<evidence type="ECO:0000255" key="1">
    <source>
        <dbReference type="HAMAP-Rule" id="MF_00203"/>
    </source>
</evidence>